<comment type="function">
    <text evidence="1">NDH-1 shuttles electrons from NADH, via FMN and iron-sulfur (Fe-S) centers, to quinones in the respiratory chain. The immediate electron acceptor for the enzyme in this species is believed to be ubiquinone. Couples the redox reaction to proton translocation (for every two electrons transferred, four hydrogen ions are translocated across the cytoplasmic membrane), and thus conserves the redox energy in a proton gradient.</text>
</comment>
<comment type="catalytic activity">
    <reaction evidence="1">
        <text>a quinone + NADH + 5 H(+)(in) = a quinol + NAD(+) + 4 H(+)(out)</text>
        <dbReference type="Rhea" id="RHEA:57888"/>
        <dbReference type="ChEBI" id="CHEBI:15378"/>
        <dbReference type="ChEBI" id="CHEBI:24646"/>
        <dbReference type="ChEBI" id="CHEBI:57540"/>
        <dbReference type="ChEBI" id="CHEBI:57945"/>
        <dbReference type="ChEBI" id="CHEBI:132124"/>
    </reaction>
</comment>
<comment type="cofactor">
    <cofactor evidence="1">
        <name>[4Fe-4S] cluster</name>
        <dbReference type="ChEBI" id="CHEBI:49883"/>
    </cofactor>
    <text evidence="1">Binds 1 [4Fe-4S] cluster.</text>
</comment>
<comment type="subunit">
    <text evidence="1">NDH-1 is composed of 14 different subunits. Subunits NuoB, C, D, E, F, and G constitute the peripheral sector of the complex.</text>
</comment>
<comment type="subcellular location">
    <subcellularLocation>
        <location evidence="1">Cell inner membrane</location>
        <topology evidence="1">Peripheral membrane protein</topology>
        <orientation evidence="1">Cytoplasmic side</orientation>
    </subcellularLocation>
</comment>
<comment type="similarity">
    <text evidence="1">Belongs to the complex I 20 kDa subunit family.</text>
</comment>
<proteinExistence type="inferred from homology"/>
<protein>
    <recommendedName>
        <fullName evidence="1">NADH-quinone oxidoreductase subunit B</fullName>
        <ecNumber evidence="1">7.1.1.-</ecNumber>
    </recommendedName>
    <alternativeName>
        <fullName evidence="1">NADH dehydrogenase I subunit B</fullName>
    </alternativeName>
    <alternativeName>
        <fullName evidence="1">NDH-1 subunit B</fullName>
    </alternativeName>
</protein>
<reference key="1">
    <citation type="journal article" date="2009" name="J. Bacteriol.">
        <title>The complete genome sequence of Helicobacter pylori strain G27.</title>
        <authorList>
            <person name="Baltrus D.A."/>
            <person name="Amieva M.R."/>
            <person name="Covacci A."/>
            <person name="Lowe T.M."/>
            <person name="Merrell D.S."/>
            <person name="Ottemann K.M."/>
            <person name="Stein M."/>
            <person name="Salama N.R."/>
            <person name="Guillemin K."/>
        </authorList>
    </citation>
    <scope>NUCLEOTIDE SEQUENCE [LARGE SCALE GENOMIC DNA]</scope>
    <source>
        <strain>G27</strain>
    </source>
</reference>
<gene>
    <name evidence="1" type="primary">nuoB</name>
    <name type="ordered locus">HPG27_1206</name>
</gene>
<accession>B5Z8Q6</accession>
<feature type="chain" id="PRO_0000376248" description="NADH-quinone oxidoreductase subunit B">
    <location>
        <begin position="1"/>
        <end position="159"/>
    </location>
</feature>
<feature type="binding site" evidence="1">
    <location>
        <position position="32"/>
    </location>
    <ligand>
        <name>[4Fe-4S] cluster</name>
        <dbReference type="ChEBI" id="CHEBI:49883"/>
    </ligand>
</feature>
<feature type="binding site" evidence="1">
    <location>
        <position position="33"/>
    </location>
    <ligand>
        <name>[4Fe-4S] cluster</name>
        <dbReference type="ChEBI" id="CHEBI:49883"/>
    </ligand>
</feature>
<feature type="binding site" evidence="1">
    <location>
        <position position="97"/>
    </location>
    <ligand>
        <name>[4Fe-4S] cluster</name>
        <dbReference type="ChEBI" id="CHEBI:49883"/>
    </ligand>
</feature>
<feature type="binding site" evidence="1">
    <location>
        <position position="126"/>
    </location>
    <ligand>
        <name>[4Fe-4S] cluster</name>
        <dbReference type="ChEBI" id="CHEBI:49883"/>
    </ligand>
</feature>
<sequence length="159" mass="17823">MQQAPVVLSTLDKLLNWGRSNSLWPLTYGLACCAIEMMATGGSRFDFDRFGTIFRASPRQSDVMIIAGTLTKKHAEFMRRLYDQMPEPKWVISMGSCANTGGMFNTYATVQGADRIVPVDIYLPGCAPRPETLQYALMVLQDKIRRSKAIKQDAPKRLV</sequence>
<keyword id="KW-0004">4Fe-4S</keyword>
<keyword id="KW-0997">Cell inner membrane</keyword>
<keyword id="KW-1003">Cell membrane</keyword>
<keyword id="KW-0408">Iron</keyword>
<keyword id="KW-0411">Iron-sulfur</keyword>
<keyword id="KW-0472">Membrane</keyword>
<keyword id="KW-0479">Metal-binding</keyword>
<keyword id="KW-0520">NAD</keyword>
<keyword id="KW-0874">Quinone</keyword>
<keyword id="KW-1185">Reference proteome</keyword>
<keyword id="KW-1278">Translocase</keyword>
<keyword id="KW-0813">Transport</keyword>
<keyword id="KW-0830">Ubiquinone</keyword>
<dbReference type="EC" id="7.1.1.-" evidence="1"/>
<dbReference type="EMBL" id="CP001173">
    <property type="protein sequence ID" value="ACI27955.1"/>
    <property type="molecule type" value="Genomic_DNA"/>
</dbReference>
<dbReference type="RefSeq" id="WP_001183508.1">
    <property type="nucleotide sequence ID" value="NC_011333.1"/>
</dbReference>
<dbReference type="SMR" id="B5Z8Q6"/>
<dbReference type="KEGG" id="hpg:HPG27_1206"/>
<dbReference type="HOGENOM" id="CLU_055737_7_3_7"/>
<dbReference type="Proteomes" id="UP000001735">
    <property type="component" value="Chromosome"/>
</dbReference>
<dbReference type="GO" id="GO:0005886">
    <property type="term" value="C:plasma membrane"/>
    <property type="evidence" value="ECO:0007669"/>
    <property type="project" value="UniProtKB-SubCell"/>
</dbReference>
<dbReference type="GO" id="GO:0045271">
    <property type="term" value="C:respiratory chain complex I"/>
    <property type="evidence" value="ECO:0007669"/>
    <property type="project" value="TreeGrafter"/>
</dbReference>
<dbReference type="GO" id="GO:0051539">
    <property type="term" value="F:4 iron, 4 sulfur cluster binding"/>
    <property type="evidence" value="ECO:0007669"/>
    <property type="project" value="UniProtKB-KW"/>
</dbReference>
<dbReference type="GO" id="GO:0005506">
    <property type="term" value="F:iron ion binding"/>
    <property type="evidence" value="ECO:0007669"/>
    <property type="project" value="UniProtKB-UniRule"/>
</dbReference>
<dbReference type="GO" id="GO:0008137">
    <property type="term" value="F:NADH dehydrogenase (ubiquinone) activity"/>
    <property type="evidence" value="ECO:0007669"/>
    <property type="project" value="InterPro"/>
</dbReference>
<dbReference type="GO" id="GO:0050136">
    <property type="term" value="F:NADH:ubiquinone reductase (non-electrogenic) activity"/>
    <property type="evidence" value="ECO:0007669"/>
    <property type="project" value="UniProtKB-UniRule"/>
</dbReference>
<dbReference type="GO" id="GO:0048038">
    <property type="term" value="F:quinone binding"/>
    <property type="evidence" value="ECO:0007669"/>
    <property type="project" value="UniProtKB-KW"/>
</dbReference>
<dbReference type="GO" id="GO:0009060">
    <property type="term" value="P:aerobic respiration"/>
    <property type="evidence" value="ECO:0007669"/>
    <property type="project" value="TreeGrafter"/>
</dbReference>
<dbReference type="GO" id="GO:0015990">
    <property type="term" value="P:electron transport coupled proton transport"/>
    <property type="evidence" value="ECO:0007669"/>
    <property type="project" value="TreeGrafter"/>
</dbReference>
<dbReference type="FunFam" id="3.40.50.12280:FF:000002">
    <property type="entry name" value="NADH-quinone oxidoreductase subunit B"/>
    <property type="match status" value="1"/>
</dbReference>
<dbReference type="Gene3D" id="3.40.50.12280">
    <property type="match status" value="1"/>
</dbReference>
<dbReference type="HAMAP" id="MF_01356">
    <property type="entry name" value="NDH1_NuoB"/>
    <property type="match status" value="1"/>
</dbReference>
<dbReference type="InterPro" id="IPR006137">
    <property type="entry name" value="NADH_UbQ_OxRdtase-like_20kDa"/>
</dbReference>
<dbReference type="InterPro" id="IPR006138">
    <property type="entry name" value="NADH_UQ_OxRdtase_20Kd_su"/>
</dbReference>
<dbReference type="NCBIfam" id="TIGR01957">
    <property type="entry name" value="nuoB_fam"/>
    <property type="match status" value="1"/>
</dbReference>
<dbReference type="NCBIfam" id="NF005012">
    <property type="entry name" value="PRK06411.1"/>
    <property type="match status" value="1"/>
</dbReference>
<dbReference type="PANTHER" id="PTHR11995">
    <property type="entry name" value="NADH DEHYDROGENASE"/>
    <property type="match status" value="1"/>
</dbReference>
<dbReference type="PANTHER" id="PTHR11995:SF14">
    <property type="entry name" value="NADH DEHYDROGENASE [UBIQUINONE] IRON-SULFUR PROTEIN 7, MITOCHONDRIAL"/>
    <property type="match status" value="1"/>
</dbReference>
<dbReference type="Pfam" id="PF01058">
    <property type="entry name" value="Oxidored_q6"/>
    <property type="match status" value="1"/>
</dbReference>
<dbReference type="SUPFAM" id="SSF56770">
    <property type="entry name" value="HydA/Nqo6-like"/>
    <property type="match status" value="1"/>
</dbReference>
<organism>
    <name type="scientific">Helicobacter pylori (strain G27)</name>
    <dbReference type="NCBI Taxonomy" id="563041"/>
    <lineage>
        <taxon>Bacteria</taxon>
        <taxon>Pseudomonadati</taxon>
        <taxon>Campylobacterota</taxon>
        <taxon>Epsilonproteobacteria</taxon>
        <taxon>Campylobacterales</taxon>
        <taxon>Helicobacteraceae</taxon>
        <taxon>Helicobacter</taxon>
    </lineage>
</organism>
<name>NUOB_HELPG</name>
<evidence type="ECO:0000255" key="1">
    <source>
        <dbReference type="HAMAP-Rule" id="MF_01356"/>
    </source>
</evidence>